<organism>
    <name type="scientific">Homo sapiens</name>
    <name type="common">Human</name>
    <dbReference type="NCBI Taxonomy" id="9606"/>
    <lineage>
        <taxon>Eukaryota</taxon>
        <taxon>Metazoa</taxon>
        <taxon>Chordata</taxon>
        <taxon>Craniata</taxon>
        <taxon>Vertebrata</taxon>
        <taxon>Euteleostomi</taxon>
        <taxon>Mammalia</taxon>
        <taxon>Eutheria</taxon>
        <taxon>Euarchontoglires</taxon>
        <taxon>Primates</taxon>
        <taxon>Haplorrhini</taxon>
        <taxon>Catarrhini</taxon>
        <taxon>Hominidae</taxon>
        <taxon>Homo</taxon>
    </lineage>
</organism>
<proteinExistence type="evidence at protein level"/>
<feature type="chain" id="PRO_0000094761" description="Tyrosine-protein phosphatase non-receptor type 7">
    <location>
        <begin position="1"/>
        <end position="360"/>
    </location>
</feature>
<feature type="domain" description="Tyrosine-protein phosphatase" evidence="2">
    <location>
        <begin position="97"/>
        <end position="350"/>
    </location>
</feature>
<feature type="region of interest" description="Disordered" evidence="4">
    <location>
        <begin position="1"/>
        <end position="37"/>
    </location>
</feature>
<feature type="region of interest" description="Interaction with MAP kinases">
    <location>
        <begin position="38"/>
        <end position="51"/>
    </location>
</feature>
<feature type="active site" description="Phosphocysteine intermediate" evidence="2 3 15">
    <location>
        <position position="291"/>
    </location>
</feature>
<feature type="binding site">
    <location>
        <position position="257"/>
    </location>
    <ligand>
        <name>substrate</name>
    </ligand>
</feature>
<feature type="binding site">
    <location>
        <begin position="291"/>
        <end position="297"/>
    </location>
    <ligand>
        <name>substrate</name>
    </ligand>
</feature>
<feature type="binding site">
    <location>
        <position position="335"/>
    </location>
    <ligand>
        <name>substrate</name>
    </ligand>
</feature>
<feature type="modified residue" description="Phosphoserine" evidence="6 8 20 21">
    <location>
        <position position="44"/>
    </location>
</feature>
<feature type="modified residue" description="Phosphothreonine" evidence="5 19 21">
    <location>
        <position position="66"/>
    </location>
</feature>
<feature type="modified residue" description="Phosphoserine" evidence="5">
    <location>
        <position position="93"/>
    </location>
</feature>
<feature type="modified residue" description="Phosphoserine" evidence="21">
    <location>
        <position position="110"/>
    </location>
</feature>
<feature type="modified residue" description="Phosphoserine" evidence="20 21">
    <location>
        <position position="143"/>
    </location>
</feature>
<feature type="modified residue" description="Cysteine sulfenic acid (-SOH)" evidence="1">
    <location>
        <position position="291"/>
    </location>
</feature>
<feature type="splice variant" id="VSP_026925" description="In isoform 2." evidence="17">
    <original>M</original>
    <variation>MGASFWPIRQAREQQRRALSFRQTSWLSEPPLGPAPHLSM</variation>
    <location>
        <position position="1"/>
    </location>
</feature>
<feature type="splice variant" id="VSP_047275" description="In isoform 3." evidence="16">
    <original>M</original>
    <variation>MVGKAWPLTHSQGTGPWAPEGHRREAADPWWQRQQAQEGRMQLGCAWVAARRGGGRKLASWSLLSPQRQTDRQTDSWQEAAWGPQLLQQTSWLSEPPLGPAPHLSM</variation>
    <location>
        <position position="1"/>
    </location>
</feature>
<feature type="mutagenesis site" description="Prevents dissociation of bound MAP kinase and enhances their dephosphorylation." evidence="8">
    <original>S</original>
    <variation>A</variation>
    <location>
        <position position="44"/>
    </location>
</feature>
<feature type="mutagenesis site" description="Reduces binding of MAP kinase." evidence="8">
    <original>S</original>
    <variation>D</variation>
    <location>
        <position position="44"/>
    </location>
</feature>
<feature type="mutagenesis site" description="Prevents dissociation of bound MAP kinase and enhances their dephosphorylation; when associated with A-93." evidence="5">
    <original>T</original>
    <variation>A</variation>
    <location>
        <position position="66"/>
    </location>
</feature>
<feature type="mutagenesis site" description="Prevents dissociation of bound MAP kinase and enhances their dephosphorylation; when associated with A-66." evidence="5">
    <original>S</original>
    <variation>A</variation>
    <location>
        <position position="93"/>
    </location>
</feature>
<feature type="mutagenesis site" description="Strongly reduced catalytic activity." evidence="11">
    <original>Y</original>
    <variation>A</variation>
    <location>
        <position position="125"/>
    </location>
</feature>
<feature type="mutagenesis site" description="Loss of catalytic activity." evidence="11">
    <original>D</original>
    <variation>A</variation>
    <location>
        <position position="257"/>
    </location>
</feature>
<feature type="mutagenesis site" description="Loss of catalytic activity." evidence="15">
    <original>C</original>
    <variation>S</variation>
    <location>
        <position position="291"/>
    </location>
</feature>
<feature type="mutagenesis site" description="Reduced catalytic activity." evidence="11">
    <original>Q</original>
    <variation>A</variation>
    <location>
        <position position="335"/>
    </location>
</feature>
<feature type="sequence conflict" description="In Ref. 2; AAA59531." evidence="18" ref="2">
    <original>QL</original>
    <variation>HV</variation>
    <location>
        <begin position="235"/>
        <end position="236"/>
    </location>
</feature>
<feature type="sequence conflict" description="In Ref. 1; BAA01946." evidence="18" ref="1">
    <original>A</original>
    <variation>D</variation>
    <location>
        <position position="337"/>
    </location>
</feature>
<feature type="helix" evidence="23">
    <location>
        <begin position="38"/>
        <end position="41"/>
    </location>
</feature>
<feature type="helix" evidence="22">
    <location>
        <begin position="67"/>
        <end position="77"/>
    </location>
</feature>
<feature type="strand" evidence="24">
    <location>
        <begin position="81"/>
        <end position="83"/>
    </location>
</feature>
<feature type="helix" evidence="22">
    <location>
        <begin position="84"/>
        <end position="89"/>
    </location>
</feature>
<feature type="helix" evidence="22">
    <location>
        <begin position="94"/>
        <end position="103"/>
    </location>
</feature>
<feature type="helix" evidence="22">
    <location>
        <begin position="111"/>
        <end position="113"/>
    </location>
</feature>
<feature type="helix" evidence="22">
    <location>
        <begin position="119"/>
        <end position="122"/>
    </location>
</feature>
<feature type="helix" evidence="22">
    <location>
        <begin position="132"/>
        <end position="134"/>
    </location>
</feature>
<feature type="strand" evidence="22">
    <location>
        <begin position="135"/>
        <end position="137"/>
    </location>
</feature>
<feature type="strand" evidence="22">
    <location>
        <begin position="149"/>
        <end position="155"/>
    </location>
</feature>
<feature type="helix" evidence="22">
    <location>
        <begin position="158"/>
        <end position="160"/>
    </location>
</feature>
<feature type="strand" evidence="22">
    <location>
        <begin position="164"/>
        <end position="169"/>
    </location>
</feature>
<feature type="helix" evidence="22">
    <location>
        <begin position="173"/>
        <end position="175"/>
    </location>
</feature>
<feature type="helix" evidence="22">
    <location>
        <begin position="176"/>
        <end position="185"/>
    </location>
</feature>
<feature type="strand" evidence="22">
    <location>
        <begin position="190"/>
        <end position="194"/>
    </location>
</feature>
<feature type="strand" evidence="25">
    <location>
        <begin position="199"/>
        <end position="201"/>
    </location>
</feature>
<feature type="strand" evidence="22">
    <location>
        <begin position="210"/>
        <end position="215"/>
    </location>
</feature>
<feature type="strand" evidence="22">
    <location>
        <begin position="218"/>
        <end position="227"/>
    </location>
</feature>
<feature type="strand" evidence="22">
    <location>
        <begin position="229"/>
        <end position="240"/>
    </location>
</feature>
<feature type="strand" evidence="22">
    <location>
        <begin position="243"/>
        <end position="252"/>
    </location>
</feature>
<feature type="helix" evidence="22">
    <location>
        <begin position="264"/>
        <end position="275"/>
    </location>
</feature>
<feature type="strand" evidence="24">
    <location>
        <begin position="281"/>
        <end position="283"/>
    </location>
</feature>
<feature type="strand" evidence="22">
    <location>
        <begin position="287"/>
        <end position="295"/>
    </location>
</feature>
<feature type="helix" evidence="22">
    <location>
        <begin position="296"/>
        <end position="314"/>
    </location>
</feature>
<feature type="strand" evidence="22">
    <location>
        <begin position="315"/>
        <end position="317"/>
    </location>
</feature>
<feature type="helix" evidence="22">
    <location>
        <begin position="319"/>
        <end position="329"/>
    </location>
</feature>
<feature type="helix" evidence="22">
    <location>
        <begin position="337"/>
        <end position="353"/>
    </location>
</feature>
<feature type="sequence conflict" description="In Ref. 4; BAG54453." evidence="18" ref="4">
    <original>Q</original>
    <variation>R</variation>
    <location sequence="P35236-3">
        <position position="37"/>
    </location>
</feature>
<sequence>MVQAHGGRSRAQPLTLSLGAAMTQPPPEKTPAKKHVRLQERRGSNVALMLDVRSLGAVEPICSVNTPREVTLHFLRTAGHPLTRWALQRQPPSPKQLEEEFLKIPSNFVSPEDLDIPGHASKDRYKTILPNPQSRVCLGRAQSQEDGDYINANYIRGYDGKEKVYIATQGPMPNTVSDFWEMVWQEEVSLIVMLTQLREGKEKCVHYWPTEEETYGPFQIRIQDMKECPEYTVRQLTIQYQEERRSVKHILFSAWPDHQTPESAGPLLRLVAEVEESPETAAHPGPIVVHCSAGIGRTGCFIATRIGCQQLKARGEVDILGIVCQLRLDRGGMIQTAEQYQFLHHTLALYAGQLPEEPSP</sequence>
<dbReference type="EC" id="3.1.3.48"/>
<dbReference type="EMBL" id="D11327">
    <property type="protein sequence ID" value="BAA01946.1"/>
    <property type="molecule type" value="mRNA"/>
</dbReference>
<dbReference type="EMBL" id="M64322">
    <property type="protein sequence ID" value="AAA59531.1"/>
    <property type="status" value="ALT_FRAME"/>
    <property type="molecule type" value="mRNA"/>
</dbReference>
<dbReference type="EMBL" id="BT009848">
    <property type="protein sequence ID" value="AAP88850.1"/>
    <property type="molecule type" value="mRNA"/>
</dbReference>
<dbReference type="EMBL" id="AK127214">
    <property type="protein sequence ID" value="BAG54453.1"/>
    <property type="molecule type" value="mRNA"/>
</dbReference>
<dbReference type="EMBL" id="AL592300">
    <property type="status" value="NOT_ANNOTATED_CDS"/>
    <property type="molecule type" value="Genomic_DNA"/>
</dbReference>
<dbReference type="EMBL" id="BC001746">
    <property type="protein sequence ID" value="AAH01746.2"/>
    <property type="molecule type" value="mRNA"/>
</dbReference>
<dbReference type="CCDS" id="CCDS1422.1">
    <molecule id="P35236-2"/>
</dbReference>
<dbReference type="CCDS" id="CCDS1423.3">
    <molecule id="P35236-1"/>
</dbReference>
<dbReference type="PIR" id="JH0692">
    <property type="entry name" value="JH0692"/>
</dbReference>
<dbReference type="RefSeq" id="NP_001351807.1">
    <molecule id="P35236-1"/>
    <property type="nucleotide sequence ID" value="NM_001364878.1"/>
</dbReference>
<dbReference type="RefSeq" id="NP_002823.3">
    <molecule id="P35236-1"/>
    <property type="nucleotide sequence ID" value="NM_002832.3"/>
</dbReference>
<dbReference type="RefSeq" id="NP_542155.1">
    <molecule id="P35236-2"/>
    <property type="nucleotide sequence ID" value="NM_080588.3"/>
</dbReference>
<dbReference type="PDB" id="1ZC0">
    <property type="method" value="X-ray"/>
    <property type="resolution" value="1.85 A"/>
    <property type="chains" value="A=65-360"/>
</dbReference>
<dbReference type="PDB" id="2A3K">
    <property type="method" value="X-ray"/>
    <property type="resolution" value="2.55 A"/>
    <property type="chains" value="A=65-358"/>
</dbReference>
<dbReference type="PDB" id="2GP0">
    <property type="method" value="X-ray"/>
    <property type="resolution" value="2.05 A"/>
    <property type="chains" value="A=65-360"/>
</dbReference>
<dbReference type="PDB" id="2GPH">
    <property type="method" value="X-ray"/>
    <property type="resolution" value="1.90 A"/>
    <property type="chains" value="B=37-52"/>
</dbReference>
<dbReference type="PDB" id="2HVL">
    <property type="method" value="X-ray"/>
    <property type="resolution" value="2.40 A"/>
    <property type="chains" value="A=65-360"/>
</dbReference>
<dbReference type="PDB" id="2QDC">
    <property type="method" value="X-ray"/>
    <property type="resolution" value="2.00 A"/>
    <property type="chains" value="A=65-360"/>
</dbReference>
<dbReference type="PDB" id="2QDM">
    <property type="method" value="X-ray"/>
    <property type="resolution" value="2.05 A"/>
    <property type="chains" value="A=65-360"/>
</dbReference>
<dbReference type="PDB" id="2QDP">
    <property type="method" value="X-ray"/>
    <property type="resolution" value="2.72 A"/>
    <property type="chains" value="A=65-360"/>
</dbReference>
<dbReference type="PDB" id="3D42">
    <property type="method" value="X-ray"/>
    <property type="resolution" value="2.46 A"/>
    <property type="chains" value="A=65-360"/>
</dbReference>
<dbReference type="PDB" id="3D44">
    <property type="method" value="X-ray"/>
    <property type="resolution" value="1.90 A"/>
    <property type="chains" value="A=65-360"/>
</dbReference>
<dbReference type="PDB" id="3O4S">
    <property type="method" value="X-ray"/>
    <property type="resolution" value="1.90 A"/>
    <property type="chains" value="A=65-360"/>
</dbReference>
<dbReference type="PDB" id="3O4T">
    <property type="method" value="X-ray"/>
    <property type="resolution" value="2.60 A"/>
    <property type="chains" value="A=65-360"/>
</dbReference>
<dbReference type="PDB" id="3O4U">
    <property type="method" value="X-ray"/>
    <property type="resolution" value="2.25 A"/>
    <property type="chains" value="A=65-360"/>
</dbReference>
<dbReference type="PDBsum" id="1ZC0"/>
<dbReference type="PDBsum" id="2A3K"/>
<dbReference type="PDBsum" id="2GP0"/>
<dbReference type="PDBsum" id="2GPH"/>
<dbReference type="PDBsum" id="2HVL"/>
<dbReference type="PDBsum" id="2QDC"/>
<dbReference type="PDBsum" id="2QDM"/>
<dbReference type="PDBsum" id="2QDP"/>
<dbReference type="PDBsum" id="3D42"/>
<dbReference type="PDBsum" id="3D44"/>
<dbReference type="PDBsum" id="3O4S"/>
<dbReference type="PDBsum" id="3O4T"/>
<dbReference type="PDBsum" id="3O4U"/>
<dbReference type="BMRB" id="P35236"/>
<dbReference type="SMR" id="P35236"/>
<dbReference type="BioGRID" id="111743">
    <property type="interactions" value="64"/>
</dbReference>
<dbReference type="DIP" id="DIP-29118N"/>
<dbReference type="ELM" id="P35236"/>
<dbReference type="FunCoup" id="P35236">
    <property type="interactions" value="595"/>
</dbReference>
<dbReference type="IntAct" id="P35236">
    <property type="interactions" value="24"/>
</dbReference>
<dbReference type="MINT" id="P35236"/>
<dbReference type="STRING" id="9606.ENSP00000309116"/>
<dbReference type="BindingDB" id="P35236"/>
<dbReference type="ChEMBL" id="CHEMBL2219"/>
<dbReference type="DrugCentral" id="P35236"/>
<dbReference type="DEPOD" id="PTPN7"/>
<dbReference type="GlyCosmos" id="P35236">
    <property type="glycosylation" value="2 sites, 1 glycan"/>
</dbReference>
<dbReference type="GlyGen" id="P35236">
    <property type="glycosylation" value="3 sites, 1 O-linked glycan (3 sites)"/>
</dbReference>
<dbReference type="iPTMnet" id="P35236"/>
<dbReference type="PhosphoSitePlus" id="P35236"/>
<dbReference type="BioMuta" id="PTPN7"/>
<dbReference type="DMDM" id="20141721"/>
<dbReference type="MassIVE" id="P35236"/>
<dbReference type="PaxDb" id="9606-ENSP00000309116"/>
<dbReference type="PeptideAtlas" id="P35236"/>
<dbReference type="ProteomicsDB" id="54996">
    <molecule id="P35236-1"/>
</dbReference>
<dbReference type="ProteomicsDB" id="54997">
    <molecule id="P35236-2"/>
</dbReference>
<dbReference type="Pumba" id="P35236"/>
<dbReference type="Antibodypedia" id="20651">
    <property type="antibodies" value="334 antibodies from 30 providers"/>
</dbReference>
<dbReference type="DNASU" id="5778"/>
<dbReference type="Ensembl" id="ENST00000309017.9">
    <molecule id="P35236-3"/>
    <property type="protein sequence ID" value="ENSP00000309116.5"/>
    <property type="gene ID" value="ENSG00000143851.17"/>
</dbReference>
<dbReference type="Ensembl" id="ENST00000367279.8">
    <molecule id="P35236-2"/>
    <property type="protein sequence ID" value="ENSP00000356248.4"/>
    <property type="gene ID" value="ENSG00000143851.17"/>
</dbReference>
<dbReference type="Ensembl" id="ENST00000477554.6">
    <molecule id="P35236-1"/>
    <property type="protein sequence ID" value="ENSP00000418416.2"/>
    <property type="gene ID" value="ENSG00000143851.17"/>
</dbReference>
<dbReference type="Ensembl" id="ENST00000495688.5">
    <molecule id="P35236-1"/>
    <property type="protein sequence ID" value="ENSP00000420506.1"/>
    <property type="gene ID" value="ENSG00000143851.17"/>
</dbReference>
<dbReference type="Ensembl" id="ENST00000691036.1">
    <molecule id="P35236-1"/>
    <property type="protein sequence ID" value="ENSP00000509436.1"/>
    <property type="gene ID" value="ENSG00000143851.17"/>
</dbReference>
<dbReference type="GeneID" id="5778"/>
<dbReference type="KEGG" id="hsa:5778"/>
<dbReference type="MANE-Select" id="ENST00000691036.1">
    <property type="protein sequence ID" value="ENSP00000509436.1"/>
    <property type="RefSeq nucleotide sequence ID" value="NM_002832.4"/>
    <property type="RefSeq protein sequence ID" value="NP_002823.4"/>
</dbReference>
<dbReference type="UCSC" id="uc001gxl.2">
    <molecule id="P35236-1"/>
    <property type="organism name" value="human"/>
</dbReference>
<dbReference type="AGR" id="HGNC:9659"/>
<dbReference type="CTD" id="5778"/>
<dbReference type="DisGeNET" id="5778"/>
<dbReference type="GeneCards" id="PTPN7"/>
<dbReference type="HGNC" id="HGNC:9659">
    <property type="gene designation" value="PTPN7"/>
</dbReference>
<dbReference type="HPA" id="ENSG00000143851">
    <property type="expression patterns" value="Group enriched (bone marrow, lymphoid tissue)"/>
</dbReference>
<dbReference type="MIM" id="176889">
    <property type="type" value="gene"/>
</dbReference>
<dbReference type="neXtProt" id="NX_P35236"/>
<dbReference type="OpenTargets" id="ENSG00000143851"/>
<dbReference type="PharmGKB" id="PA34003"/>
<dbReference type="VEuPathDB" id="HostDB:ENSG00000143851"/>
<dbReference type="eggNOG" id="KOG0789">
    <property type="taxonomic scope" value="Eukaryota"/>
</dbReference>
<dbReference type="GeneTree" id="ENSGT00940000160979"/>
<dbReference type="HOGENOM" id="CLU_001645_10_3_1"/>
<dbReference type="InParanoid" id="P35236"/>
<dbReference type="OMA" id="GYDGREK"/>
<dbReference type="OrthoDB" id="9993594at2759"/>
<dbReference type="PAN-GO" id="P35236">
    <property type="GO annotations" value="2 GO annotations based on evolutionary models"/>
</dbReference>
<dbReference type="PhylomeDB" id="P35236"/>
<dbReference type="TreeFam" id="TF331016"/>
<dbReference type="BRENDA" id="3.1.3.48">
    <property type="organism ID" value="2681"/>
</dbReference>
<dbReference type="PathwayCommons" id="P35236"/>
<dbReference type="Reactome" id="R-HSA-5675221">
    <property type="pathway name" value="Negative regulation of MAPK pathway"/>
</dbReference>
<dbReference type="Reactome" id="R-HSA-9008059">
    <property type="pathway name" value="Interleukin-37 signaling"/>
</dbReference>
<dbReference type="SABIO-RK" id="P35236"/>
<dbReference type="SignaLink" id="P35236"/>
<dbReference type="SIGNOR" id="P35236"/>
<dbReference type="BioGRID-ORCS" id="5778">
    <property type="hits" value="29 hits in 1170 CRISPR screens"/>
</dbReference>
<dbReference type="ChiTaRS" id="PTPN7">
    <property type="organism name" value="human"/>
</dbReference>
<dbReference type="EvolutionaryTrace" id="P35236"/>
<dbReference type="GeneWiki" id="PTPN7"/>
<dbReference type="GenomeRNAi" id="5778"/>
<dbReference type="Pharos" id="P35236">
    <property type="development level" value="Tchem"/>
</dbReference>
<dbReference type="PRO" id="PR:P35236"/>
<dbReference type="Proteomes" id="UP000005640">
    <property type="component" value="Chromosome 1"/>
</dbReference>
<dbReference type="RNAct" id="P35236">
    <property type="molecule type" value="protein"/>
</dbReference>
<dbReference type="Bgee" id="ENSG00000143851">
    <property type="expression patterns" value="Expressed in granulocyte and 117 other cell types or tissues"/>
</dbReference>
<dbReference type="ExpressionAtlas" id="P35236">
    <property type="expression patterns" value="baseline and differential"/>
</dbReference>
<dbReference type="GO" id="GO:0005737">
    <property type="term" value="C:cytoplasm"/>
    <property type="evidence" value="ECO:0000314"/>
    <property type="project" value="UniProtKB"/>
</dbReference>
<dbReference type="GO" id="GO:0009898">
    <property type="term" value="C:cytoplasmic side of plasma membrane"/>
    <property type="evidence" value="ECO:0000314"/>
    <property type="project" value="UniProtKB"/>
</dbReference>
<dbReference type="GO" id="GO:0005829">
    <property type="term" value="C:cytosol"/>
    <property type="evidence" value="ECO:0000314"/>
    <property type="project" value="BHF-UCL"/>
</dbReference>
<dbReference type="GO" id="GO:0015630">
    <property type="term" value="C:microtubule cytoskeleton"/>
    <property type="evidence" value="ECO:0000314"/>
    <property type="project" value="HPA"/>
</dbReference>
<dbReference type="GO" id="GO:0072686">
    <property type="term" value="C:mitotic spindle"/>
    <property type="evidence" value="ECO:0000314"/>
    <property type="project" value="HPA"/>
</dbReference>
<dbReference type="GO" id="GO:0005654">
    <property type="term" value="C:nucleoplasm"/>
    <property type="evidence" value="ECO:0000304"/>
    <property type="project" value="Reactome"/>
</dbReference>
<dbReference type="GO" id="GO:0004726">
    <property type="term" value="F:non-membrane spanning protein tyrosine phosphatase activity"/>
    <property type="evidence" value="ECO:0000304"/>
    <property type="project" value="Reactome"/>
</dbReference>
<dbReference type="GO" id="GO:0004725">
    <property type="term" value="F:protein tyrosine phosphatase activity"/>
    <property type="evidence" value="ECO:0000318"/>
    <property type="project" value="GO_Central"/>
</dbReference>
<dbReference type="GO" id="GO:0000165">
    <property type="term" value="P:MAPK cascade"/>
    <property type="evidence" value="ECO:0000304"/>
    <property type="project" value="Reactome"/>
</dbReference>
<dbReference type="GO" id="GO:0006470">
    <property type="term" value="P:protein dephosphorylation"/>
    <property type="evidence" value="ECO:0000304"/>
    <property type="project" value="ProtInc"/>
</dbReference>
<dbReference type="GO" id="GO:0007165">
    <property type="term" value="P:signal transduction"/>
    <property type="evidence" value="ECO:0000318"/>
    <property type="project" value="GO_Central"/>
</dbReference>
<dbReference type="CDD" id="cd14612">
    <property type="entry name" value="PTPc-N7"/>
    <property type="match status" value="1"/>
</dbReference>
<dbReference type="DisProt" id="DP01646"/>
<dbReference type="FunFam" id="3.90.190.10:FF:000020">
    <property type="entry name" value="Tyrosine-protein phosphatase non-receptor type 5"/>
    <property type="match status" value="1"/>
</dbReference>
<dbReference type="Gene3D" id="3.90.190.10">
    <property type="entry name" value="Protein tyrosine phosphatase superfamily"/>
    <property type="match status" value="1"/>
</dbReference>
<dbReference type="IDEAL" id="IID00617"/>
<dbReference type="InterPro" id="IPR029021">
    <property type="entry name" value="Prot-tyrosine_phosphatase-like"/>
</dbReference>
<dbReference type="InterPro" id="IPR000242">
    <property type="entry name" value="PTP_cat"/>
</dbReference>
<dbReference type="InterPro" id="IPR016130">
    <property type="entry name" value="Tyr_Pase_AS"/>
</dbReference>
<dbReference type="InterPro" id="IPR003595">
    <property type="entry name" value="Tyr_Pase_cat"/>
</dbReference>
<dbReference type="InterPro" id="IPR000387">
    <property type="entry name" value="Tyr_Pase_dom"/>
</dbReference>
<dbReference type="InterPro" id="IPR008356">
    <property type="entry name" value="Tyr_Pase_KIM-con"/>
</dbReference>
<dbReference type="PANTHER" id="PTHR46198">
    <property type="entry name" value="PROTEIN-TYROSINE-PHOSPHATASE"/>
    <property type="match status" value="1"/>
</dbReference>
<dbReference type="PANTHER" id="PTHR46198:SF3">
    <property type="entry name" value="PROTEIN-TYROSINE-PHOSPHATASE"/>
    <property type="match status" value="1"/>
</dbReference>
<dbReference type="Pfam" id="PF00102">
    <property type="entry name" value="Y_phosphatase"/>
    <property type="match status" value="1"/>
</dbReference>
<dbReference type="PRINTS" id="PR01778">
    <property type="entry name" value="KIMPTPASE"/>
</dbReference>
<dbReference type="PRINTS" id="PR00700">
    <property type="entry name" value="PRTYPHPHTASE"/>
</dbReference>
<dbReference type="SMART" id="SM00194">
    <property type="entry name" value="PTPc"/>
    <property type="match status" value="1"/>
</dbReference>
<dbReference type="SMART" id="SM00404">
    <property type="entry name" value="PTPc_motif"/>
    <property type="match status" value="1"/>
</dbReference>
<dbReference type="SUPFAM" id="SSF52799">
    <property type="entry name" value="(Phosphotyrosine protein) phosphatases II"/>
    <property type="match status" value="1"/>
</dbReference>
<dbReference type="PROSITE" id="PS00383">
    <property type="entry name" value="TYR_PHOSPHATASE_1"/>
    <property type="match status" value="1"/>
</dbReference>
<dbReference type="PROSITE" id="PS50056">
    <property type="entry name" value="TYR_PHOSPHATASE_2"/>
    <property type="match status" value="1"/>
</dbReference>
<dbReference type="PROSITE" id="PS50055">
    <property type="entry name" value="TYR_PHOSPHATASE_PTP"/>
    <property type="match status" value="1"/>
</dbReference>
<keyword id="KW-0002">3D-structure</keyword>
<keyword id="KW-0025">Alternative splicing</keyword>
<keyword id="KW-0963">Cytoplasm</keyword>
<keyword id="KW-0206">Cytoskeleton</keyword>
<keyword id="KW-0378">Hydrolase</keyword>
<keyword id="KW-0558">Oxidation</keyword>
<keyword id="KW-0597">Phosphoprotein</keyword>
<keyword id="KW-0904">Protein phosphatase</keyword>
<keyword id="KW-1267">Proteomics identification</keyword>
<keyword id="KW-1185">Reference proteome</keyword>
<name>PTN7_HUMAN</name>
<gene>
    <name type="primary">PTPN7</name>
</gene>
<reference key="1">
    <citation type="journal article" date="1992" name="Biochem. Biophys. Res. Commun.">
        <title>Molecular cloning and chromosomal mapping of a human protein-tyrosine phosphatase LC-PTP.</title>
        <authorList>
            <person name="Adachi M."/>
            <person name="Sekiya M."/>
            <person name="Isobe M."/>
            <person name="Kumura Y."/>
            <person name="Ogita Z.I."/>
            <person name="Hinoda Y."/>
            <person name="Imai K."/>
            <person name="Yachi A."/>
        </authorList>
    </citation>
    <scope>NUCLEOTIDE SEQUENCE [MRNA] (ISOFORM 1)</scope>
    <scope>TISSUE SPECIFICITY</scope>
    <scope>FUNCTION</scope>
</reference>
<reference key="2">
    <citation type="journal article" date="1992" name="Eur. J. Immunol.">
        <title>Cloning and expression of an inducible lymphoid-specific, protein tyrosine phosphatase (HePTPase).</title>
        <authorList>
            <person name="Zanke B."/>
            <person name="Suzuki H."/>
            <person name="Kishihara K."/>
            <person name="Mizzen L."/>
            <person name="Minden M."/>
            <person name="Pawson A."/>
            <person name="Mak T.W."/>
        </authorList>
    </citation>
    <scope>NUCLEOTIDE SEQUENCE [MRNA] (ISOFORM 1)</scope>
    <scope>FUNCTION</scope>
    <scope>TISSUE SPECIFICITY</scope>
    <source>
        <tissue>Lymphocyte</tissue>
    </source>
</reference>
<reference key="3">
    <citation type="submission" date="2003-08" db="EMBL/GenBank/DDBJ databases">
        <title>Cloning of human full-length CDSs in BD Creator(TM) system donor vector.</title>
        <authorList>
            <person name="Kalnine N."/>
            <person name="Chen X."/>
            <person name="Rolfs A."/>
            <person name="Halleck A."/>
            <person name="Hines L."/>
            <person name="Eisenstein S."/>
            <person name="Koundinya M."/>
            <person name="Raphael J."/>
            <person name="Moreira D."/>
            <person name="Kelley T."/>
            <person name="LaBaer J."/>
            <person name="Lin Y."/>
            <person name="Phelan M."/>
            <person name="Farmer A."/>
        </authorList>
    </citation>
    <scope>NUCLEOTIDE SEQUENCE [LARGE SCALE MRNA] (ISOFORM 1)</scope>
</reference>
<reference key="4">
    <citation type="journal article" date="2004" name="Nat. Genet.">
        <title>Complete sequencing and characterization of 21,243 full-length human cDNAs.</title>
        <authorList>
            <person name="Ota T."/>
            <person name="Suzuki Y."/>
            <person name="Nishikawa T."/>
            <person name="Otsuki T."/>
            <person name="Sugiyama T."/>
            <person name="Irie R."/>
            <person name="Wakamatsu A."/>
            <person name="Hayashi K."/>
            <person name="Sato H."/>
            <person name="Nagai K."/>
            <person name="Kimura K."/>
            <person name="Makita H."/>
            <person name="Sekine M."/>
            <person name="Obayashi M."/>
            <person name="Nishi T."/>
            <person name="Shibahara T."/>
            <person name="Tanaka T."/>
            <person name="Ishii S."/>
            <person name="Yamamoto J."/>
            <person name="Saito K."/>
            <person name="Kawai Y."/>
            <person name="Isono Y."/>
            <person name="Nakamura Y."/>
            <person name="Nagahari K."/>
            <person name="Murakami K."/>
            <person name="Yasuda T."/>
            <person name="Iwayanagi T."/>
            <person name="Wagatsuma M."/>
            <person name="Shiratori A."/>
            <person name="Sudo H."/>
            <person name="Hosoiri T."/>
            <person name="Kaku Y."/>
            <person name="Kodaira H."/>
            <person name="Kondo H."/>
            <person name="Sugawara M."/>
            <person name="Takahashi M."/>
            <person name="Kanda K."/>
            <person name="Yokoi T."/>
            <person name="Furuya T."/>
            <person name="Kikkawa E."/>
            <person name="Omura Y."/>
            <person name="Abe K."/>
            <person name="Kamihara K."/>
            <person name="Katsuta N."/>
            <person name="Sato K."/>
            <person name="Tanikawa M."/>
            <person name="Yamazaki M."/>
            <person name="Ninomiya K."/>
            <person name="Ishibashi T."/>
            <person name="Yamashita H."/>
            <person name="Murakawa K."/>
            <person name="Fujimori K."/>
            <person name="Tanai H."/>
            <person name="Kimata M."/>
            <person name="Watanabe M."/>
            <person name="Hiraoka S."/>
            <person name="Chiba Y."/>
            <person name="Ishida S."/>
            <person name="Ono Y."/>
            <person name="Takiguchi S."/>
            <person name="Watanabe S."/>
            <person name="Yosida M."/>
            <person name="Hotuta T."/>
            <person name="Kusano J."/>
            <person name="Kanehori K."/>
            <person name="Takahashi-Fujii A."/>
            <person name="Hara H."/>
            <person name="Tanase T.-O."/>
            <person name="Nomura Y."/>
            <person name="Togiya S."/>
            <person name="Komai F."/>
            <person name="Hara R."/>
            <person name="Takeuchi K."/>
            <person name="Arita M."/>
            <person name="Imose N."/>
            <person name="Musashino K."/>
            <person name="Yuuki H."/>
            <person name="Oshima A."/>
            <person name="Sasaki N."/>
            <person name="Aotsuka S."/>
            <person name="Yoshikawa Y."/>
            <person name="Matsunawa H."/>
            <person name="Ichihara T."/>
            <person name="Shiohata N."/>
            <person name="Sano S."/>
            <person name="Moriya S."/>
            <person name="Momiyama H."/>
            <person name="Satoh N."/>
            <person name="Takami S."/>
            <person name="Terashima Y."/>
            <person name="Suzuki O."/>
            <person name="Nakagawa S."/>
            <person name="Senoh A."/>
            <person name="Mizoguchi H."/>
            <person name="Goto Y."/>
            <person name="Shimizu F."/>
            <person name="Wakebe H."/>
            <person name="Hishigaki H."/>
            <person name="Watanabe T."/>
            <person name="Sugiyama A."/>
            <person name="Takemoto M."/>
            <person name="Kawakami B."/>
            <person name="Yamazaki M."/>
            <person name="Watanabe K."/>
            <person name="Kumagai A."/>
            <person name="Itakura S."/>
            <person name="Fukuzumi Y."/>
            <person name="Fujimori Y."/>
            <person name="Komiyama M."/>
            <person name="Tashiro H."/>
            <person name="Tanigami A."/>
            <person name="Fujiwara T."/>
            <person name="Ono T."/>
            <person name="Yamada K."/>
            <person name="Fujii Y."/>
            <person name="Ozaki K."/>
            <person name="Hirao M."/>
            <person name="Ohmori Y."/>
            <person name="Kawabata A."/>
            <person name="Hikiji T."/>
            <person name="Kobatake N."/>
            <person name="Inagaki H."/>
            <person name="Ikema Y."/>
            <person name="Okamoto S."/>
            <person name="Okitani R."/>
            <person name="Kawakami T."/>
            <person name="Noguchi S."/>
            <person name="Itoh T."/>
            <person name="Shigeta K."/>
            <person name="Senba T."/>
            <person name="Matsumura K."/>
            <person name="Nakajima Y."/>
            <person name="Mizuno T."/>
            <person name="Morinaga M."/>
            <person name="Sasaki M."/>
            <person name="Togashi T."/>
            <person name="Oyama M."/>
            <person name="Hata H."/>
            <person name="Watanabe M."/>
            <person name="Komatsu T."/>
            <person name="Mizushima-Sugano J."/>
            <person name="Satoh T."/>
            <person name="Shirai Y."/>
            <person name="Takahashi Y."/>
            <person name="Nakagawa K."/>
            <person name="Okumura K."/>
            <person name="Nagase T."/>
            <person name="Nomura N."/>
            <person name="Kikuchi H."/>
            <person name="Masuho Y."/>
            <person name="Yamashita R."/>
            <person name="Nakai K."/>
            <person name="Yada T."/>
            <person name="Nakamura Y."/>
            <person name="Ohara O."/>
            <person name="Isogai T."/>
            <person name="Sugano S."/>
        </authorList>
    </citation>
    <scope>NUCLEOTIDE SEQUENCE [LARGE SCALE MRNA] (ISOFORM 3)</scope>
    <source>
        <tissue>Hippocampus</tissue>
    </source>
</reference>
<reference key="5">
    <citation type="journal article" date="2006" name="Nature">
        <title>The DNA sequence and biological annotation of human chromosome 1.</title>
        <authorList>
            <person name="Gregory S.G."/>
            <person name="Barlow K.F."/>
            <person name="McLay K.E."/>
            <person name="Kaul R."/>
            <person name="Swarbreck D."/>
            <person name="Dunham A."/>
            <person name="Scott C.E."/>
            <person name="Howe K.L."/>
            <person name="Woodfine K."/>
            <person name="Spencer C.C.A."/>
            <person name="Jones M.C."/>
            <person name="Gillson C."/>
            <person name="Searle S."/>
            <person name="Zhou Y."/>
            <person name="Kokocinski F."/>
            <person name="McDonald L."/>
            <person name="Evans R."/>
            <person name="Phillips K."/>
            <person name="Atkinson A."/>
            <person name="Cooper R."/>
            <person name="Jones C."/>
            <person name="Hall R.E."/>
            <person name="Andrews T.D."/>
            <person name="Lloyd C."/>
            <person name="Ainscough R."/>
            <person name="Almeida J.P."/>
            <person name="Ambrose K.D."/>
            <person name="Anderson F."/>
            <person name="Andrew R.W."/>
            <person name="Ashwell R.I.S."/>
            <person name="Aubin K."/>
            <person name="Babbage A.K."/>
            <person name="Bagguley C.L."/>
            <person name="Bailey J."/>
            <person name="Beasley H."/>
            <person name="Bethel G."/>
            <person name="Bird C.P."/>
            <person name="Bray-Allen S."/>
            <person name="Brown J.Y."/>
            <person name="Brown A.J."/>
            <person name="Buckley D."/>
            <person name="Burton J."/>
            <person name="Bye J."/>
            <person name="Carder C."/>
            <person name="Chapman J.C."/>
            <person name="Clark S.Y."/>
            <person name="Clarke G."/>
            <person name="Clee C."/>
            <person name="Cobley V."/>
            <person name="Collier R.E."/>
            <person name="Corby N."/>
            <person name="Coville G.J."/>
            <person name="Davies J."/>
            <person name="Deadman R."/>
            <person name="Dunn M."/>
            <person name="Earthrowl M."/>
            <person name="Ellington A.G."/>
            <person name="Errington H."/>
            <person name="Frankish A."/>
            <person name="Frankland J."/>
            <person name="French L."/>
            <person name="Garner P."/>
            <person name="Garnett J."/>
            <person name="Gay L."/>
            <person name="Ghori M.R.J."/>
            <person name="Gibson R."/>
            <person name="Gilby L.M."/>
            <person name="Gillett W."/>
            <person name="Glithero R.J."/>
            <person name="Grafham D.V."/>
            <person name="Griffiths C."/>
            <person name="Griffiths-Jones S."/>
            <person name="Grocock R."/>
            <person name="Hammond S."/>
            <person name="Harrison E.S.I."/>
            <person name="Hart E."/>
            <person name="Haugen E."/>
            <person name="Heath P.D."/>
            <person name="Holmes S."/>
            <person name="Holt K."/>
            <person name="Howden P.J."/>
            <person name="Hunt A.R."/>
            <person name="Hunt S.E."/>
            <person name="Hunter G."/>
            <person name="Isherwood J."/>
            <person name="James R."/>
            <person name="Johnson C."/>
            <person name="Johnson D."/>
            <person name="Joy A."/>
            <person name="Kay M."/>
            <person name="Kershaw J.K."/>
            <person name="Kibukawa M."/>
            <person name="Kimberley A.M."/>
            <person name="King A."/>
            <person name="Knights A.J."/>
            <person name="Lad H."/>
            <person name="Laird G."/>
            <person name="Lawlor S."/>
            <person name="Leongamornlert D.A."/>
            <person name="Lloyd D.M."/>
            <person name="Loveland J."/>
            <person name="Lovell J."/>
            <person name="Lush M.J."/>
            <person name="Lyne R."/>
            <person name="Martin S."/>
            <person name="Mashreghi-Mohammadi M."/>
            <person name="Matthews L."/>
            <person name="Matthews N.S.W."/>
            <person name="McLaren S."/>
            <person name="Milne S."/>
            <person name="Mistry S."/>
            <person name="Moore M.J.F."/>
            <person name="Nickerson T."/>
            <person name="O'Dell C.N."/>
            <person name="Oliver K."/>
            <person name="Palmeiri A."/>
            <person name="Palmer S.A."/>
            <person name="Parker A."/>
            <person name="Patel D."/>
            <person name="Pearce A.V."/>
            <person name="Peck A.I."/>
            <person name="Pelan S."/>
            <person name="Phelps K."/>
            <person name="Phillimore B.J."/>
            <person name="Plumb R."/>
            <person name="Rajan J."/>
            <person name="Raymond C."/>
            <person name="Rouse G."/>
            <person name="Saenphimmachak C."/>
            <person name="Sehra H.K."/>
            <person name="Sheridan E."/>
            <person name="Shownkeen R."/>
            <person name="Sims S."/>
            <person name="Skuce C.D."/>
            <person name="Smith M."/>
            <person name="Steward C."/>
            <person name="Subramanian S."/>
            <person name="Sycamore N."/>
            <person name="Tracey A."/>
            <person name="Tromans A."/>
            <person name="Van Helmond Z."/>
            <person name="Wall M."/>
            <person name="Wallis J.M."/>
            <person name="White S."/>
            <person name="Whitehead S.L."/>
            <person name="Wilkinson J.E."/>
            <person name="Willey D.L."/>
            <person name="Williams H."/>
            <person name="Wilming L."/>
            <person name="Wray P.W."/>
            <person name="Wu Z."/>
            <person name="Coulson A."/>
            <person name="Vaudin M."/>
            <person name="Sulston J.E."/>
            <person name="Durbin R.M."/>
            <person name="Hubbard T."/>
            <person name="Wooster R."/>
            <person name="Dunham I."/>
            <person name="Carter N.P."/>
            <person name="McVean G."/>
            <person name="Ross M.T."/>
            <person name="Harrow J."/>
            <person name="Olson M.V."/>
            <person name="Beck S."/>
            <person name="Rogers J."/>
            <person name="Bentley D.R."/>
        </authorList>
    </citation>
    <scope>NUCLEOTIDE SEQUENCE [LARGE SCALE GENOMIC DNA]</scope>
    <scope>ALTERNATIVE SPLICING</scope>
</reference>
<reference key="6">
    <citation type="journal article" date="2004" name="Genome Res.">
        <title>The status, quality, and expansion of the NIH full-length cDNA project: the Mammalian Gene Collection (MGC).</title>
        <authorList>
            <consortium name="The MGC Project Team"/>
        </authorList>
    </citation>
    <scope>NUCLEOTIDE SEQUENCE [LARGE SCALE MRNA] (ISOFORM 2)</scope>
    <source>
        <tissue>Lymph</tissue>
    </source>
</reference>
<reference key="7">
    <citation type="journal article" date="1998" name="J. Biol. Chem.">
        <title>Negative regulation of T cell antigen receptor signal transduction by hematopoietic tyrosine phosphatase (HePTP).</title>
        <authorList>
            <person name="Saxena M."/>
            <person name="Williams S."/>
            <person name="Gilman J."/>
            <person name="Mustelin T."/>
        </authorList>
    </citation>
    <scope>FUNCTION</scope>
    <scope>INTERACTION WITH MAPK1</scope>
    <scope>ACTIVE SITE</scope>
    <scope>MUTAGENESIS OF CYS-291</scope>
</reference>
<reference key="8">
    <citation type="journal article" date="1999" name="J. Biol. Chem.">
        <title>Inhibition of T cell signaling by mitogen-activated protein kinase-targeted hematopoietic tyrosine phosphatase (HePTP).</title>
        <authorList>
            <person name="Saxena M."/>
            <person name="Williams S."/>
            <person name="Brockdorff J."/>
            <person name="Gilman J."/>
            <person name="Mustelin T."/>
        </authorList>
    </citation>
    <scope>FUNCTION</scope>
    <scope>INTERACTION WITH MAPK1 AND MAPK3</scope>
    <scope>PHOSPHORYLATION AT THR-66 AND SER-93</scope>
    <scope>MUTAGENESIS OF THR-66 AND SER-93</scope>
</reference>
<reference key="9">
    <citation type="journal article" date="1999" name="Nat. Cell Biol.">
        <title>Crosstalk between cAMP-dependent kinase and MAP kinase through a protein tyrosine phosphatase.</title>
        <authorList>
            <person name="Saxena M."/>
            <person name="Williams S."/>
            <person name="Tasken K."/>
            <person name="Mustelin T."/>
        </authorList>
    </citation>
    <scope>FUNCTION</scope>
    <scope>INTERACTION WITH MAPK1</scope>
    <scope>PHOSPHORYLATION AT SER-44</scope>
</reference>
<reference key="10">
    <citation type="journal article" date="2000" name="Oncogene">
        <title>The MAP-kinase ERK2 is a specific substrate of the protein tyrosine phosphatase HePTP.</title>
        <authorList>
            <person name="Pettiford S.M."/>
            <person name="Herbst R."/>
        </authorList>
    </citation>
    <scope>FUNCTION</scope>
    <scope>INTERACTION WITH MAPK1 AND MAPK3</scope>
</reference>
<reference key="11">
    <citation type="journal article" date="2004" name="Biochem. J.">
        <title>Haematopoietic protein tyrosine phosphatase (HePTP) phosphorylation by cAMP-dependent protein kinase in T-cells: dynamics and subcellular location.</title>
        <authorList>
            <person name="Nika K."/>
            <person name="Hyunh H."/>
            <person name="Williams S."/>
            <person name="Paul S."/>
            <person name="Bottini N."/>
            <person name="Tasken K."/>
            <person name="Lombroso P.J."/>
            <person name="Mustelin T."/>
        </authorList>
    </citation>
    <scope>SUBCELLULAR LOCATION</scope>
    <scope>PHOSPHORYLATION AT SER-44</scope>
    <scope>MUTAGENESIS OF SER-44</scope>
</reference>
<reference key="12">
    <citation type="journal article" date="2004" name="J. Biol. Chem.">
        <title>Molecular determinants of substrate recognition in hematopoietic protein-tyrosine phosphatase.</title>
        <authorList>
            <person name="Huang Z."/>
            <person name="Zhou B."/>
            <person name="Zhang Z.-Y."/>
        </authorList>
    </citation>
    <scope>MUTAGENESIS OF TYR-125; ASP-257 AND GLN-335</scope>
</reference>
<reference key="13">
    <citation type="journal article" date="2008" name="J. Proteome Res.">
        <title>Phosphoproteome of resting human platelets.</title>
        <authorList>
            <person name="Zahedi R.P."/>
            <person name="Lewandrowski U."/>
            <person name="Wiesner J."/>
            <person name="Wortelkamp S."/>
            <person name="Moebius J."/>
            <person name="Schuetz C."/>
            <person name="Walter U."/>
            <person name="Gambaryan S."/>
            <person name="Sickmann A."/>
        </authorList>
    </citation>
    <scope>PHOSPHORYLATION [LARGE SCALE ANALYSIS] AT THR-66</scope>
    <scope>IDENTIFICATION BY MASS SPECTROMETRY [LARGE SCALE ANALYSIS]</scope>
    <source>
        <tissue>Platelet</tissue>
    </source>
</reference>
<reference key="14">
    <citation type="journal article" date="2009" name="Sci. Signal.">
        <title>Quantitative phosphoproteomic analysis of T cell receptor signaling reveals system-wide modulation of protein-protein interactions.</title>
        <authorList>
            <person name="Mayya V."/>
            <person name="Lundgren D.H."/>
            <person name="Hwang S.-I."/>
            <person name="Rezaul K."/>
            <person name="Wu L."/>
            <person name="Eng J.K."/>
            <person name="Rodionov V."/>
            <person name="Han D.K."/>
        </authorList>
    </citation>
    <scope>PHOSPHORYLATION [LARGE SCALE ANALYSIS] AT SER-44 AND SER-143</scope>
    <scope>IDENTIFICATION BY MASS SPECTROMETRY [LARGE SCALE ANALYSIS]</scope>
    <source>
        <tissue>Leukemic T-cell</tissue>
    </source>
</reference>
<reference key="15">
    <citation type="journal article" date="2013" name="J. Proteome Res.">
        <title>Toward a comprehensive characterization of a human cancer cell phosphoproteome.</title>
        <authorList>
            <person name="Zhou H."/>
            <person name="Di Palma S."/>
            <person name="Preisinger C."/>
            <person name="Peng M."/>
            <person name="Polat A.N."/>
            <person name="Heck A.J."/>
            <person name="Mohammed S."/>
        </authorList>
    </citation>
    <scope>PHOSPHORYLATION [LARGE SCALE ANALYSIS] AT SER-44; THR-66; SER-110 AND SER-143</scope>
    <scope>IDENTIFICATION BY MASS SPECTROMETRY [LARGE SCALE ANALYSIS]</scope>
    <source>
        <tissue>Erythroleukemia</tissue>
    </source>
</reference>
<reference key="16">
    <citation type="journal article" date="2005" name="J. Mol. Biol.">
        <title>Structure of the hematopoietic tyrosine phosphatase (HePTP) catalytic domain: structure of a KIM phosphatase with phosphate bound at the active site.</title>
        <authorList>
            <person name="Mustelin T."/>
            <person name="Tautz L."/>
            <person name="Page R."/>
        </authorList>
    </citation>
    <scope>X-RAY CRYSTALLOGRAPHY (1.85 ANGSTROMS) OF 65-360 OF MUTANT ASP-246 IN COMPLEX WITH SUBSTRATE ANALOG</scope>
</reference>
<reference key="17">
    <citation type="journal article" date="2006" name="Biochem. J.">
        <title>Crystal structures and inhibitor identification for PTPN5, PTPRR and PTPN7: a family of human MAPK-specific protein tyrosine phosphatases.</title>
        <authorList>
            <person name="Eswaran J."/>
            <person name="von Kries J.P."/>
            <person name="Marsden B."/>
            <person name="Longman E."/>
            <person name="Debreczeni J.E."/>
            <person name="Ugochukwu E."/>
            <person name="Turnbull A."/>
            <person name="Lee W.H."/>
            <person name="Knapp S."/>
            <person name="Barr A.J."/>
        </authorList>
    </citation>
    <scope>X-RAY CRYSTALLOGRAPHY (2.55 ANGSTROMS) OF 65-358 IN COMPLEX WITH SUBSTRATE ANALOG</scope>
    <scope>SUBUNIT</scope>
</reference>
<reference key="18">
    <citation type="journal article" date="2006" name="Structure">
        <title>Docking interactions induce exposure of activation loop in the MAP kinase ERK2.</title>
        <authorList>
            <person name="Zhou T."/>
            <person name="Sun L."/>
            <person name="Humphreys J."/>
            <person name="Goldsmith E.J."/>
        </authorList>
    </citation>
    <scope>X-RAY CRYSTALLOGRAPHY (1.9 ANGSTROMS) OF 37-52 IN COMPLEX WITH MAPK1</scope>
</reference>
<protein>
    <recommendedName>
        <fullName>Tyrosine-protein phosphatase non-receptor type 7</fullName>
        <ecNumber>3.1.3.48</ecNumber>
    </recommendedName>
    <alternativeName>
        <fullName>Hematopoietic protein-tyrosine phosphatase</fullName>
        <shortName>HEPTP</shortName>
    </alternativeName>
    <alternativeName>
        <fullName>Protein-tyrosine phosphatase LC-PTP</fullName>
    </alternativeName>
</protein>
<comment type="function">
    <text evidence="5 6 7 9 10 15">Protein phosphatase that acts preferentially on tyrosine-phosphorylated MAPK1. Plays a role in the regulation of T and B-lymphocyte development and signal transduction.</text>
</comment>
<comment type="catalytic activity">
    <reaction evidence="3">
        <text>O-phospho-L-tyrosyl-[protein] + H2O = L-tyrosyl-[protein] + phosphate</text>
        <dbReference type="Rhea" id="RHEA:10684"/>
        <dbReference type="Rhea" id="RHEA-COMP:10136"/>
        <dbReference type="Rhea" id="RHEA-COMP:20101"/>
        <dbReference type="ChEBI" id="CHEBI:15377"/>
        <dbReference type="ChEBI" id="CHEBI:43474"/>
        <dbReference type="ChEBI" id="CHEBI:46858"/>
        <dbReference type="ChEBI" id="CHEBI:61978"/>
        <dbReference type="EC" id="3.1.3.48"/>
    </reaction>
</comment>
<comment type="activity regulation">
    <text evidence="1">Inhibited in cells after FCER1A triggering.</text>
</comment>
<comment type="subunit">
    <text evidence="5 6 7 12 13 14 15">Monomer. Interacts with MAPK1, MAPK3 and several other MAP kinases.</text>
</comment>
<comment type="interaction">
    <interactant intactId="EBI-2265723">
        <id>P35236</id>
    </interactant>
    <interactant intactId="EBI-2808286">
        <id>Q2TAC2</id>
        <label>CCDC57</label>
    </interactant>
    <organismsDiffer>false</organismsDiffer>
    <experiments>3</experiments>
</comment>
<comment type="interaction">
    <interactant intactId="EBI-2265723">
        <id>P35236</id>
    </interactant>
    <interactant intactId="EBI-10172181">
        <id>Q53SE7</id>
        <label>FLJ13057</label>
    </interactant>
    <organismsDiffer>false</organismsDiffer>
    <experiments>3</experiments>
</comment>
<comment type="interaction">
    <interactant intactId="EBI-2265723">
        <id>P35236</id>
    </interactant>
    <interactant intactId="EBI-959949">
        <id>P28482</id>
        <label>MAPK1</label>
    </interactant>
    <organismsDiffer>false</organismsDiffer>
    <experiments>6</experiments>
</comment>
<comment type="interaction">
    <interactant intactId="EBI-2265723">
        <id>P35236</id>
    </interactant>
    <interactant intactId="EBI-298727">
        <id>P47811</id>
        <label>Mapk14</label>
    </interactant>
    <organismsDiffer>true</organismsDiffer>
    <experiments>2</experiments>
</comment>
<comment type="interaction">
    <interactant intactId="EBI-12281408">
        <id>P35236-2</id>
    </interactant>
    <interactant intactId="EBI-2548508">
        <id>Q96IK5</id>
        <label>GMCL1</label>
    </interactant>
    <organismsDiffer>false</organismsDiffer>
    <experiments>3</experiments>
</comment>
<comment type="subcellular location">
    <subcellularLocation>
        <location evidence="8">Cytoplasm</location>
    </subcellularLocation>
    <subcellularLocation>
        <location evidence="1">Cytoplasm</location>
        <location evidence="1">Cytoskeleton</location>
    </subcellularLocation>
</comment>
<comment type="alternative products">
    <event type="alternative splicing"/>
    <isoform>
        <id>P35236-1</id>
        <name>1</name>
        <sequence type="displayed"/>
    </isoform>
    <isoform>
        <id>P35236-2</id>
        <name>2</name>
        <sequence type="described" ref="VSP_026925"/>
    </isoform>
    <isoform>
        <id>P35236-3</id>
        <name>3</name>
        <sequence type="described" ref="VSP_047275"/>
    </isoform>
</comment>
<comment type="tissue specificity">
    <text evidence="9 10">Expressed exclusively in thymus and spleen.</text>
</comment>
<comment type="PTM">
    <text evidence="5 6 8">Phosphorylated on serine residues in resting T-cells. Phosphorylation increases upon exposure to stimuli that increase intracellular cAMP levels. Phosphorylation leads to dissociation of bound MAP kinases.</text>
</comment>
<comment type="PTM">
    <text evidence="1">Oxidized at active site cysteine. Treatment with pervanadate (vanadate and H(2)O(2)) or with antigen enhanced oxidation of active site cysteine (By similarity).</text>
</comment>
<comment type="similarity">
    <text evidence="18">Belongs to the protein-tyrosine phosphatase family. Non-receptor class subfamily.</text>
</comment>
<comment type="sequence caution" evidence="18">
    <conflict type="frameshift">
        <sequence resource="EMBL-CDS" id="AAA59531"/>
    </conflict>
</comment>
<comment type="online information" name="Atlas of Genetics and Cytogenetics in Oncology and Haematology">
    <link uri="https://atlasgeneticsoncology.org/gene/41921/PTPN7"/>
</comment>
<evidence type="ECO:0000250" key="1"/>
<evidence type="ECO:0000255" key="2">
    <source>
        <dbReference type="PROSITE-ProRule" id="PRU00160"/>
    </source>
</evidence>
<evidence type="ECO:0000255" key="3">
    <source>
        <dbReference type="PROSITE-ProRule" id="PRU10044"/>
    </source>
</evidence>
<evidence type="ECO:0000256" key="4">
    <source>
        <dbReference type="SAM" id="MobiDB-lite"/>
    </source>
</evidence>
<evidence type="ECO:0000269" key="5">
    <source>
    </source>
</evidence>
<evidence type="ECO:0000269" key="6">
    <source>
    </source>
</evidence>
<evidence type="ECO:0000269" key="7">
    <source>
    </source>
</evidence>
<evidence type="ECO:0000269" key="8">
    <source>
    </source>
</evidence>
<evidence type="ECO:0000269" key="9">
    <source>
    </source>
</evidence>
<evidence type="ECO:0000269" key="10">
    <source>
    </source>
</evidence>
<evidence type="ECO:0000269" key="11">
    <source>
    </source>
</evidence>
<evidence type="ECO:0000269" key="12">
    <source>
    </source>
</evidence>
<evidence type="ECO:0000269" key="13">
    <source>
    </source>
</evidence>
<evidence type="ECO:0000269" key="14">
    <source>
    </source>
</evidence>
<evidence type="ECO:0000269" key="15">
    <source>
    </source>
</evidence>
<evidence type="ECO:0000303" key="16">
    <source>
    </source>
</evidence>
<evidence type="ECO:0000303" key="17">
    <source>
    </source>
</evidence>
<evidence type="ECO:0000305" key="18"/>
<evidence type="ECO:0007744" key="19">
    <source>
    </source>
</evidence>
<evidence type="ECO:0007744" key="20">
    <source>
    </source>
</evidence>
<evidence type="ECO:0007744" key="21">
    <source>
    </source>
</evidence>
<evidence type="ECO:0007829" key="22">
    <source>
        <dbReference type="PDB" id="1ZC0"/>
    </source>
</evidence>
<evidence type="ECO:0007829" key="23">
    <source>
        <dbReference type="PDB" id="2GPH"/>
    </source>
</evidence>
<evidence type="ECO:0007829" key="24">
    <source>
        <dbReference type="PDB" id="3D44"/>
    </source>
</evidence>
<evidence type="ECO:0007829" key="25">
    <source>
        <dbReference type="PDB" id="3O4S"/>
    </source>
</evidence>
<accession>P35236</accession>
<accession>B3KXE1</accession>
<accession>Q53XK4</accession>
<accession>Q5SXQ0</accession>
<accession>Q5SXQ1</accession>
<accession>Q9BV05</accession>